<proteinExistence type="inferred from homology"/>
<keyword id="KW-0028">Amino-acid biosynthesis</keyword>
<keyword id="KW-0378">Hydrolase</keyword>
<keyword id="KW-0486">Methionine biosynthesis</keyword>
<organism>
    <name type="scientific">Shewanella sp. (strain W3-18-1)</name>
    <dbReference type="NCBI Taxonomy" id="351745"/>
    <lineage>
        <taxon>Bacteria</taxon>
        <taxon>Pseudomonadati</taxon>
        <taxon>Pseudomonadota</taxon>
        <taxon>Gammaproteobacteria</taxon>
        <taxon>Alteromonadales</taxon>
        <taxon>Shewanellaceae</taxon>
        <taxon>Shewanella</taxon>
    </lineage>
</organism>
<gene>
    <name evidence="1" type="primary">mtnN</name>
    <name type="ordered locus">Sputw3181_3030</name>
</gene>
<dbReference type="EC" id="3.2.2.9" evidence="1"/>
<dbReference type="EMBL" id="CP000503">
    <property type="protein sequence ID" value="ABM25847.1"/>
    <property type="molecule type" value="Genomic_DNA"/>
</dbReference>
<dbReference type="RefSeq" id="WP_011790299.1">
    <property type="nucleotide sequence ID" value="NC_008750.1"/>
</dbReference>
<dbReference type="SMR" id="A1RMF2"/>
<dbReference type="KEGG" id="shw:Sputw3181_3030"/>
<dbReference type="HOGENOM" id="CLU_031248_2_2_6"/>
<dbReference type="UniPathway" id="UPA00904">
    <property type="reaction ID" value="UER00871"/>
</dbReference>
<dbReference type="Proteomes" id="UP000002597">
    <property type="component" value="Chromosome"/>
</dbReference>
<dbReference type="GO" id="GO:0005829">
    <property type="term" value="C:cytosol"/>
    <property type="evidence" value="ECO:0007669"/>
    <property type="project" value="TreeGrafter"/>
</dbReference>
<dbReference type="GO" id="GO:0008782">
    <property type="term" value="F:adenosylhomocysteine nucleosidase activity"/>
    <property type="evidence" value="ECO:0007669"/>
    <property type="project" value="UniProtKB-UniRule"/>
</dbReference>
<dbReference type="GO" id="GO:0008930">
    <property type="term" value="F:methylthioadenosine nucleosidase activity"/>
    <property type="evidence" value="ECO:0007669"/>
    <property type="project" value="UniProtKB-UniRule"/>
</dbReference>
<dbReference type="GO" id="GO:0019509">
    <property type="term" value="P:L-methionine salvage from methylthioadenosine"/>
    <property type="evidence" value="ECO:0007669"/>
    <property type="project" value="UniProtKB-UniRule"/>
</dbReference>
<dbReference type="GO" id="GO:0019284">
    <property type="term" value="P:L-methionine salvage from S-adenosylmethionine"/>
    <property type="evidence" value="ECO:0007669"/>
    <property type="project" value="TreeGrafter"/>
</dbReference>
<dbReference type="GO" id="GO:0009164">
    <property type="term" value="P:nucleoside catabolic process"/>
    <property type="evidence" value="ECO:0007669"/>
    <property type="project" value="InterPro"/>
</dbReference>
<dbReference type="CDD" id="cd09008">
    <property type="entry name" value="MTAN"/>
    <property type="match status" value="1"/>
</dbReference>
<dbReference type="FunFam" id="3.40.50.1580:FF:000001">
    <property type="entry name" value="MTA/SAH nucleosidase family protein"/>
    <property type="match status" value="1"/>
</dbReference>
<dbReference type="Gene3D" id="3.40.50.1580">
    <property type="entry name" value="Nucleoside phosphorylase domain"/>
    <property type="match status" value="1"/>
</dbReference>
<dbReference type="HAMAP" id="MF_01684">
    <property type="entry name" value="Salvage_MtnN"/>
    <property type="match status" value="1"/>
</dbReference>
<dbReference type="InterPro" id="IPR010049">
    <property type="entry name" value="MTA_SAH_Nsdase"/>
</dbReference>
<dbReference type="InterPro" id="IPR000845">
    <property type="entry name" value="Nucleoside_phosphorylase_d"/>
</dbReference>
<dbReference type="InterPro" id="IPR035994">
    <property type="entry name" value="Nucleoside_phosphorylase_sf"/>
</dbReference>
<dbReference type="NCBIfam" id="TIGR01704">
    <property type="entry name" value="MTA_SAH-Nsdase"/>
    <property type="match status" value="1"/>
</dbReference>
<dbReference type="NCBIfam" id="NF004079">
    <property type="entry name" value="PRK05584.1"/>
    <property type="match status" value="1"/>
</dbReference>
<dbReference type="PANTHER" id="PTHR46832">
    <property type="entry name" value="5'-METHYLTHIOADENOSINE/S-ADENOSYLHOMOCYSTEINE NUCLEOSIDASE"/>
    <property type="match status" value="1"/>
</dbReference>
<dbReference type="PANTHER" id="PTHR46832:SF1">
    <property type="entry name" value="5'-METHYLTHIOADENOSINE_S-ADENOSYLHOMOCYSTEINE NUCLEOSIDASE"/>
    <property type="match status" value="1"/>
</dbReference>
<dbReference type="Pfam" id="PF01048">
    <property type="entry name" value="PNP_UDP_1"/>
    <property type="match status" value="1"/>
</dbReference>
<dbReference type="SUPFAM" id="SSF53167">
    <property type="entry name" value="Purine and uridine phosphorylases"/>
    <property type="match status" value="1"/>
</dbReference>
<feature type="chain" id="PRO_0000359354" description="5'-methylthioadenosine/S-adenosylhomocysteine nucleosidase">
    <location>
        <begin position="1"/>
        <end position="231"/>
    </location>
</feature>
<feature type="active site" description="Proton acceptor" evidence="1">
    <location>
        <position position="12"/>
    </location>
</feature>
<feature type="active site" description="Proton donor" evidence="1">
    <location>
        <position position="198"/>
    </location>
</feature>
<feature type="binding site" evidence="1">
    <location>
        <position position="78"/>
    </location>
    <ligand>
        <name>substrate</name>
    </ligand>
</feature>
<feature type="binding site" evidence="1">
    <location>
        <position position="153"/>
    </location>
    <ligand>
        <name>substrate</name>
    </ligand>
</feature>
<feature type="binding site" evidence="1">
    <location>
        <begin position="174"/>
        <end position="175"/>
    </location>
    <ligand>
        <name>substrate</name>
    </ligand>
</feature>
<reference key="1">
    <citation type="submission" date="2006-12" db="EMBL/GenBank/DDBJ databases">
        <title>Complete sequence of Shewanella sp. W3-18-1.</title>
        <authorList>
            <consortium name="US DOE Joint Genome Institute"/>
            <person name="Copeland A."/>
            <person name="Lucas S."/>
            <person name="Lapidus A."/>
            <person name="Barry K."/>
            <person name="Detter J.C."/>
            <person name="Glavina del Rio T."/>
            <person name="Hammon N."/>
            <person name="Israni S."/>
            <person name="Dalin E."/>
            <person name="Tice H."/>
            <person name="Pitluck S."/>
            <person name="Chain P."/>
            <person name="Malfatti S."/>
            <person name="Shin M."/>
            <person name="Vergez L."/>
            <person name="Schmutz J."/>
            <person name="Larimer F."/>
            <person name="Land M."/>
            <person name="Hauser L."/>
            <person name="Kyrpides N."/>
            <person name="Lykidis A."/>
            <person name="Tiedje J."/>
            <person name="Richardson P."/>
        </authorList>
    </citation>
    <scope>NUCLEOTIDE SEQUENCE [LARGE SCALE GENOMIC DNA]</scope>
    <source>
        <strain>W3-18-1</strain>
    </source>
</reference>
<accession>A1RMF2</accession>
<name>MTNN_SHESW</name>
<evidence type="ECO:0000255" key="1">
    <source>
        <dbReference type="HAMAP-Rule" id="MF_01684"/>
    </source>
</evidence>
<comment type="function">
    <text evidence="1">Catalyzes the irreversible cleavage of the glycosidic bond in both 5'-methylthioadenosine (MTA) and S-adenosylhomocysteine (SAH/AdoHcy) to adenine and the corresponding thioribose, 5'-methylthioribose and S-ribosylhomocysteine, respectively. Also cleaves 5'-deoxyadenosine, a toxic by-product of radical S-adenosylmethionine (SAM) enzymes, into 5-deoxyribose and adenine.</text>
</comment>
<comment type="catalytic activity">
    <reaction evidence="1">
        <text>S-adenosyl-L-homocysteine + H2O = S-(5-deoxy-D-ribos-5-yl)-L-homocysteine + adenine</text>
        <dbReference type="Rhea" id="RHEA:17805"/>
        <dbReference type="ChEBI" id="CHEBI:15377"/>
        <dbReference type="ChEBI" id="CHEBI:16708"/>
        <dbReference type="ChEBI" id="CHEBI:57856"/>
        <dbReference type="ChEBI" id="CHEBI:58195"/>
        <dbReference type="EC" id="3.2.2.9"/>
    </reaction>
</comment>
<comment type="catalytic activity">
    <reaction evidence="1">
        <text>S-methyl-5'-thioadenosine + H2O = 5-(methylsulfanyl)-D-ribose + adenine</text>
        <dbReference type="Rhea" id="RHEA:13617"/>
        <dbReference type="ChEBI" id="CHEBI:15377"/>
        <dbReference type="ChEBI" id="CHEBI:16708"/>
        <dbReference type="ChEBI" id="CHEBI:17509"/>
        <dbReference type="ChEBI" id="CHEBI:78440"/>
        <dbReference type="EC" id="3.2.2.9"/>
    </reaction>
</comment>
<comment type="catalytic activity">
    <reaction evidence="1">
        <text>5'-deoxyadenosine + H2O = 5-deoxy-D-ribose + adenine</text>
        <dbReference type="Rhea" id="RHEA:29859"/>
        <dbReference type="ChEBI" id="CHEBI:15377"/>
        <dbReference type="ChEBI" id="CHEBI:16708"/>
        <dbReference type="ChEBI" id="CHEBI:17319"/>
        <dbReference type="ChEBI" id="CHEBI:149540"/>
        <dbReference type="EC" id="3.2.2.9"/>
    </reaction>
    <physiologicalReaction direction="left-to-right" evidence="1">
        <dbReference type="Rhea" id="RHEA:29860"/>
    </physiologicalReaction>
</comment>
<comment type="pathway">
    <text evidence="1">Amino-acid biosynthesis; L-methionine biosynthesis via salvage pathway; S-methyl-5-thio-alpha-D-ribose 1-phosphate from S-methyl-5'-thioadenosine (hydrolase route): step 1/2.</text>
</comment>
<comment type="similarity">
    <text evidence="1">Belongs to the PNP/UDP phosphorylase family. MtnN subfamily.</text>
</comment>
<sequence length="231" mass="24192">MKIGIIGAMEPEVAHLIAAMTNATSQTIAGIEFIAGTLAGKDVVVTRSGIGKVAASIATTLLIEKYTPDAVINTGSAGGFVDTLAIGDIVISSEVRHHDVDVTAFGYEIGQMAQQPAAFIPAAHLVEAANKAIAQLGEVKAIEGLICTGDSFICDPVRTQAMLKNFPTMAACEMEGAAIAQVCHQFGVPFVVIRSLSDNANNDSPVDFDSYIVKAGYHSALMVMLLLEQLK</sequence>
<protein>
    <recommendedName>
        <fullName evidence="1">5'-methylthioadenosine/S-adenosylhomocysteine nucleosidase</fullName>
        <shortName evidence="1">MTA/SAH nucleosidase</shortName>
        <shortName evidence="1">MTAN</shortName>
        <ecNumber evidence="1">3.2.2.9</ecNumber>
    </recommendedName>
    <alternativeName>
        <fullName evidence="1">5'-deoxyadenosine nucleosidase</fullName>
        <shortName evidence="1">DOA nucleosidase</shortName>
        <shortName evidence="1">dAdo nucleosidase</shortName>
    </alternativeName>
    <alternativeName>
        <fullName evidence="1">5'-methylthioadenosine nucleosidase</fullName>
        <shortName evidence="1">MTA nucleosidase</shortName>
    </alternativeName>
    <alternativeName>
        <fullName evidence="1">S-adenosylhomocysteine nucleosidase</fullName>
        <shortName evidence="1">AdoHcy nucleosidase</shortName>
        <shortName evidence="1">SAH nucleosidase</shortName>
        <shortName evidence="1">SRH nucleosidase</shortName>
    </alternativeName>
</protein>